<organism>
    <name type="scientific">Shewanella sp. (strain ANA-3)</name>
    <dbReference type="NCBI Taxonomy" id="94122"/>
    <lineage>
        <taxon>Bacteria</taxon>
        <taxon>Pseudomonadati</taxon>
        <taxon>Pseudomonadota</taxon>
        <taxon>Gammaproteobacteria</taxon>
        <taxon>Alteromonadales</taxon>
        <taxon>Shewanellaceae</taxon>
        <taxon>Shewanella</taxon>
    </lineage>
</organism>
<sequence length="181" mass="20668">MAADANNLIWIDLEMTGLEPDVDRVIEIATLVTDQELNIIGQGPVIAIHQSDDVLAAMDDWNQKHHGESGLIDRVRASQMNEAQAVAQTIAFLEQYVPKGASPMCGNSVGQDRRFLNRYMRELEDYFHYRNLDVSTVKELVKRWSPETMAGFKKQNTHQALQDIQESIAELQYYRSKVFKI</sequence>
<accession>A0KSR0</accession>
<keyword id="KW-0963">Cytoplasm</keyword>
<keyword id="KW-0269">Exonuclease</keyword>
<keyword id="KW-0378">Hydrolase</keyword>
<keyword id="KW-0540">Nuclease</keyword>
<dbReference type="EC" id="3.1.15.-" evidence="1"/>
<dbReference type="EMBL" id="CP000469">
    <property type="protein sequence ID" value="ABK46829.1"/>
    <property type="molecule type" value="Genomic_DNA"/>
</dbReference>
<dbReference type="RefSeq" id="WP_011715784.1">
    <property type="nucleotide sequence ID" value="NC_008577.1"/>
</dbReference>
<dbReference type="SMR" id="A0KSR0"/>
<dbReference type="STRING" id="94122.Shewana3_0590"/>
<dbReference type="KEGG" id="shn:Shewana3_0590"/>
<dbReference type="eggNOG" id="COG1949">
    <property type="taxonomic scope" value="Bacteria"/>
</dbReference>
<dbReference type="HOGENOM" id="CLU_064761_2_0_6"/>
<dbReference type="OrthoDB" id="9801329at2"/>
<dbReference type="Proteomes" id="UP000002589">
    <property type="component" value="Chromosome"/>
</dbReference>
<dbReference type="GO" id="GO:0005737">
    <property type="term" value="C:cytoplasm"/>
    <property type="evidence" value="ECO:0007669"/>
    <property type="project" value="UniProtKB-SubCell"/>
</dbReference>
<dbReference type="GO" id="GO:0000175">
    <property type="term" value="F:3'-5'-RNA exonuclease activity"/>
    <property type="evidence" value="ECO:0007669"/>
    <property type="project" value="InterPro"/>
</dbReference>
<dbReference type="GO" id="GO:0003676">
    <property type="term" value="F:nucleic acid binding"/>
    <property type="evidence" value="ECO:0007669"/>
    <property type="project" value="InterPro"/>
</dbReference>
<dbReference type="GO" id="GO:0006259">
    <property type="term" value="P:DNA metabolic process"/>
    <property type="evidence" value="ECO:0007669"/>
    <property type="project" value="UniProtKB-ARBA"/>
</dbReference>
<dbReference type="CDD" id="cd06135">
    <property type="entry name" value="Orn"/>
    <property type="match status" value="1"/>
</dbReference>
<dbReference type="FunFam" id="3.30.420.10:FF:000003">
    <property type="entry name" value="Oligoribonuclease"/>
    <property type="match status" value="1"/>
</dbReference>
<dbReference type="Gene3D" id="3.30.420.10">
    <property type="entry name" value="Ribonuclease H-like superfamily/Ribonuclease H"/>
    <property type="match status" value="1"/>
</dbReference>
<dbReference type="HAMAP" id="MF_00045">
    <property type="entry name" value="Oligoribonuclease"/>
    <property type="match status" value="1"/>
</dbReference>
<dbReference type="InterPro" id="IPR013520">
    <property type="entry name" value="Exonuclease_RNaseT/DNA_pol3"/>
</dbReference>
<dbReference type="InterPro" id="IPR022894">
    <property type="entry name" value="Oligoribonuclease"/>
</dbReference>
<dbReference type="InterPro" id="IPR012337">
    <property type="entry name" value="RNaseH-like_sf"/>
</dbReference>
<dbReference type="InterPro" id="IPR036397">
    <property type="entry name" value="RNaseH_sf"/>
</dbReference>
<dbReference type="NCBIfam" id="NF003765">
    <property type="entry name" value="PRK05359.1"/>
    <property type="match status" value="1"/>
</dbReference>
<dbReference type="PANTHER" id="PTHR11046">
    <property type="entry name" value="OLIGORIBONUCLEASE, MITOCHONDRIAL"/>
    <property type="match status" value="1"/>
</dbReference>
<dbReference type="PANTHER" id="PTHR11046:SF0">
    <property type="entry name" value="OLIGORIBONUCLEASE, MITOCHONDRIAL"/>
    <property type="match status" value="1"/>
</dbReference>
<dbReference type="Pfam" id="PF00929">
    <property type="entry name" value="RNase_T"/>
    <property type="match status" value="1"/>
</dbReference>
<dbReference type="SMART" id="SM00479">
    <property type="entry name" value="EXOIII"/>
    <property type="match status" value="1"/>
</dbReference>
<dbReference type="SUPFAM" id="SSF53098">
    <property type="entry name" value="Ribonuclease H-like"/>
    <property type="match status" value="1"/>
</dbReference>
<evidence type="ECO:0000255" key="1">
    <source>
        <dbReference type="HAMAP-Rule" id="MF_00045"/>
    </source>
</evidence>
<comment type="function">
    <text evidence="1">3'-to-5' exoribonuclease specific for small oligoribonucleotides.</text>
</comment>
<comment type="subcellular location">
    <subcellularLocation>
        <location evidence="1">Cytoplasm</location>
    </subcellularLocation>
</comment>
<comment type="similarity">
    <text evidence="1">Belongs to the oligoribonuclease family.</text>
</comment>
<reference key="1">
    <citation type="submission" date="2006-09" db="EMBL/GenBank/DDBJ databases">
        <title>Complete sequence of chromosome 1 of Shewanella sp. ANA-3.</title>
        <authorList>
            <person name="Copeland A."/>
            <person name="Lucas S."/>
            <person name="Lapidus A."/>
            <person name="Barry K."/>
            <person name="Detter J.C."/>
            <person name="Glavina del Rio T."/>
            <person name="Hammon N."/>
            <person name="Israni S."/>
            <person name="Dalin E."/>
            <person name="Tice H."/>
            <person name="Pitluck S."/>
            <person name="Chertkov O."/>
            <person name="Brettin T."/>
            <person name="Bruce D."/>
            <person name="Han C."/>
            <person name="Tapia R."/>
            <person name="Gilna P."/>
            <person name="Schmutz J."/>
            <person name="Larimer F."/>
            <person name="Land M."/>
            <person name="Hauser L."/>
            <person name="Kyrpides N."/>
            <person name="Kim E."/>
            <person name="Newman D."/>
            <person name="Salticov C."/>
            <person name="Konstantinidis K."/>
            <person name="Klappenback J."/>
            <person name="Tiedje J."/>
            <person name="Richardson P."/>
        </authorList>
    </citation>
    <scope>NUCLEOTIDE SEQUENCE [LARGE SCALE GENOMIC DNA]</scope>
    <source>
        <strain>ANA-3</strain>
    </source>
</reference>
<feature type="chain" id="PRO_1000004289" description="Oligoribonuclease">
    <location>
        <begin position="1"/>
        <end position="181"/>
    </location>
</feature>
<feature type="domain" description="Exonuclease" evidence="1">
    <location>
        <begin position="8"/>
        <end position="171"/>
    </location>
</feature>
<feature type="active site" evidence="1">
    <location>
        <position position="129"/>
    </location>
</feature>
<name>ORN_SHESA</name>
<proteinExistence type="inferred from homology"/>
<protein>
    <recommendedName>
        <fullName evidence="1">Oligoribonuclease</fullName>
        <ecNumber evidence="1">3.1.15.-</ecNumber>
    </recommendedName>
</protein>
<gene>
    <name evidence="1" type="primary">orn</name>
    <name type="ordered locus">Shewana3_0590</name>
</gene>